<organism>
    <name type="scientific">Leifsonia xyli subsp. xyli (strain CTCB07)</name>
    <dbReference type="NCBI Taxonomy" id="281090"/>
    <lineage>
        <taxon>Bacteria</taxon>
        <taxon>Bacillati</taxon>
        <taxon>Actinomycetota</taxon>
        <taxon>Actinomycetes</taxon>
        <taxon>Micrococcales</taxon>
        <taxon>Microbacteriaceae</taxon>
        <taxon>Leifsonia</taxon>
    </lineage>
</organism>
<name>HIS5_LEIXX</name>
<gene>
    <name evidence="1" type="primary">hisH</name>
    <name type="ordered locus">Lxx15840</name>
</gene>
<proteinExistence type="inferred from homology"/>
<keyword id="KW-0028">Amino-acid biosynthesis</keyword>
<keyword id="KW-0963">Cytoplasm</keyword>
<keyword id="KW-0315">Glutamine amidotransferase</keyword>
<keyword id="KW-0368">Histidine biosynthesis</keyword>
<keyword id="KW-0378">Hydrolase</keyword>
<keyword id="KW-0456">Lyase</keyword>
<keyword id="KW-1185">Reference proteome</keyword>
<reference key="1">
    <citation type="journal article" date="2004" name="Mol. Plant Microbe Interact.">
        <title>The genome sequence of the Gram-positive sugarcane pathogen Leifsonia xyli subsp. xyli.</title>
        <authorList>
            <person name="Monteiro-Vitorello C.B."/>
            <person name="Camargo L.E.A."/>
            <person name="Van Sluys M.A."/>
            <person name="Kitajima J.P."/>
            <person name="Truffi D."/>
            <person name="do Amaral A.M."/>
            <person name="Harakava R."/>
            <person name="de Oliveira J.C.F."/>
            <person name="Wood D."/>
            <person name="de Oliveira M.C."/>
            <person name="Miyaki C.Y."/>
            <person name="Takita M.A."/>
            <person name="da Silva A.C.R."/>
            <person name="Furlan L.R."/>
            <person name="Carraro D.M."/>
            <person name="Camarotte G."/>
            <person name="Almeida N.F. Jr."/>
            <person name="Carrer H."/>
            <person name="Coutinho L.L."/>
            <person name="El-Dorry H.A."/>
            <person name="Ferro M.I.T."/>
            <person name="Gagliardi P.R."/>
            <person name="Giglioti E."/>
            <person name="Goldman M.H.S."/>
            <person name="Goldman G.H."/>
            <person name="Kimura E.T."/>
            <person name="Ferro E.S."/>
            <person name="Kuramae E.E."/>
            <person name="Lemos E.G.M."/>
            <person name="Lemos M.V.F."/>
            <person name="Mauro S.M.Z."/>
            <person name="Machado M.A."/>
            <person name="Marino C.L."/>
            <person name="Menck C.F."/>
            <person name="Nunes L.R."/>
            <person name="Oliveira R.C."/>
            <person name="Pereira G.G."/>
            <person name="Siqueira W."/>
            <person name="de Souza A.A."/>
            <person name="Tsai S.M."/>
            <person name="Zanca A.S."/>
            <person name="Simpson A.J.G."/>
            <person name="Brumbley S.M."/>
            <person name="Setubal J.C."/>
        </authorList>
    </citation>
    <scope>NUCLEOTIDE SEQUENCE [LARGE SCALE GENOMIC DNA]</scope>
    <source>
        <strain>CTCB07</strain>
    </source>
</reference>
<accession>Q6AE14</accession>
<sequence length="209" mass="22361">MSRPVVVFEYGSGNVHSAVKALEAAGADVELTRDRRRAQEADGLVVPGVGAFAAVVDRLRAAHGDEIIERRLAGGRPVLGICVGMQVMFERGTEHGQETAGLGEWPGAVEPLCAGVVPHVGWNAVEAPADSVLFDGVWDERFYFVHSYAAQHWTLEATGPFPKPRVSWAEHGSRFVAAVENGPLSATQFHPEKSGSAGLRLLANWIGSL</sequence>
<comment type="function">
    <text evidence="1">IGPS catalyzes the conversion of PRFAR and glutamine to IGP, AICAR and glutamate. The HisH subunit catalyzes the hydrolysis of glutamine to glutamate and ammonia as part of the synthesis of IGP and AICAR. The resulting ammonia molecule is channeled to the active site of HisF.</text>
</comment>
<comment type="catalytic activity">
    <reaction evidence="1">
        <text>5-[(5-phospho-1-deoxy-D-ribulos-1-ylimino)methylamino]-1-(5-phospho-beta-D-ribosyl)imidazole-4-carboxamide + L-glutamine = D-erythro-1-(imidazol-4-yl)glycerol 3-phosphate + 5-amino-1-(5-phospho-beta-D-ribosyl)imidazole-4-carboxamide + L-glutamate + H(+)</text>
        <dbReference type="Rhea" id="RHEA:24793"/>
        <dbReference type="ChEBI" id="CHEBI:15378"/>
        <dbReference type="ChEBI" id="CHEBI:29985"/>
        <dbReference type="ChEBI" id="CHEBI:58278"/>
        <dbReference type="ChEBI" id="CHEBI:58359"/>
        <dbReference type="ChEBI" id="CHEBI:58475"/>
        <dbReference type="ChEBI" id="CHEBI:58525"/>
        <dbReference type="EC" id="4.3.2.10"/>
    </reaction>
</comment>
<comment type="catalytic activity">
    <reaction evidence="1">
        <text>L-glutamine + H2O = L-glutamate + NH4(+)</text>
        <dbReference type="Rhea" id="RHEA:15889"/>
        <dbReference type="ChEBI" id="CHEBI:15377"/>
        <dbReference type="ChEBI" id="CHEBI:28938"/>
        <dbReference type="ChEBI" id="CHEBI:29985"/>
        <dbReference type="ChEBI" id="CHEBI:58359"/>
        <dbReference type="EC" id="3.5.1.2"/>
    </reaction>
</comment>
<comment type="pathway">
    <text evidence="1">Amino-acid biosynthesis; L-histidine biosynthesis; L-histidine from 5-phospho-alpha-D-ribose 1-diphosphate: step 5/9.</text>
</comment>
<comment type="subunit">
    <text evidence="1">Heterodimer of HisH and HisF.</text>
</comment>
<comment type="subcellular location">
    <subcellularLocation>
        <location evidence="1">Cytoplasm</location>
    </subcellularLocation>
</comment>
<feature type="chain" id="PRO_0000152384" description="Imidazole glycerol phosphate synthase subunit HisH">
    <location>
        <begin position="1"/>
        <end position="209"/>
    </location>
</feature>
<feature type="domain" description="Glutamine amidotransferase type-1" evidence="1">
    <location>
        <begin position="4"/>
        <end position="209"/>
    </location>
</feature>
<feature type="active site" description="Nucleophile" evidence="1">
    <location>
        <position position="82"/>
    </location>
</feature>
<feature type="active site" evidence="1">
    <location>
        <position position="190"/>
    </location>
</feature>
<feature type="active site" evidence="1">
    <location>
        <position position="192"/>
    </location>
</feature>
<dbReference type="EC" id="4.3.2.10" evidence="1"/>
<dbReference type="EC" id="3.5.1.2" evidence="1"/>
<dbReference type="EMBL" id="AE016822">
    <property type="protein sequence ID" value="AAT89382.1"/>
    <property type="molecule type" value="Genomic_DNA"/>
</dbReference>
<dbReference type="RefSeq" id="WP_011186371.1">
    <property type="nucleotide sequence ID" value="NC_006087.1"/>
</dbReference>
<dbReference type="SMR" id="Q6AE14"/>
<dbReference type="STRING" id="281090.Lxx15840"/>
<dbReference type="KEGG" id="lxx:Lxx15840"/>
<dbReference type="eggNOG" id="COG0118">
    <property type="taxonomic scope" value="Bacteria"/>
</dbReference>
<dbReference type="HOGENOM" id="CLU_071837_1_0_11"/>
<dbReference type="UniPathway" id="UPA00031">
    <property type="reaction ID" value="UER00010"/>
</dbReference>
<dbReference type="Proteomes" id="UP000001306">
    <property type="component" value="Chromosome"/>
</dbReference>
<dbReference type="GO" id="GO:0005737">
    <property type="term" value="C:cytoplasm"/>
    <property type="evidence" value="ECO:0007669"/>
    <property type="project" value="UniProtKB-SubCell"/>
</dbReference>
<dbReference type="GO" id="GO:0004359">
    <property type="term" value="F:glutaminase activity"/>
    <property type="evidence" value="ECO:0007669"/>
    <property type="project" value="UniProtKB-EC"/>
</dbReference>
<dbReference type="GO" id="GO:0000107">
    <property type="term" value="F:imidazoleglycerol-phosphate synthase activity"/>
    <property type="evidence" value="ECO:0007669"/>
    <property type="project" value="UniProtKB-UniRule"/>
</dbReference>
<dbReference type="GO" id="GO:0016829">
    <property type="term" value="F:lyase activity"/>
    <property type="evidence" value="ECO:0007669"/>
    <property type="project" value="UniProtKB-KW"/>
</dbReference>
<dbReference type="GO" id="GO:0000105">
    <property type="term" value="P:L-histidine biosynthetic process"/>
    <property type="evidence" value="ECO:0007669"/>
    <property type="project" value="UniProtKB-UniRule"/>
</dbReference>
<dbReference type="CDD" id="cd01748">
    <property type="entry name" value="GATase1_IGP_Synthase"/>
    <property type="match status" value="1"/>
</dbReference>
<dbReference type="FunFam" id="3.40.50.880:FF:000056">
    <property type="entry name" value="Imidazole glycerol phosphate synthase subunit HisH"/>
    <property type="match status" value="1"/>
</dbReference>
<dbReference type="Gene3D" id="3.40.50.880">
    <property type="match status" value="1"/>
</dbReference>
<dbReference type="HAMAP" id="MF_00278">
    <property type="entry name" value="HisH"/>
    <property type="match status" value="1"/>
</dbReference>
<dbReference type="InterPro" id="IPR029062">
    <property type="entry name" value="Class_I_gatase-like"/>
</dbReference>
<dbReference type="InterPro" id="IPR017926">
    <property type="entry name" value="GATASE"/>
</dbReference>
<dbReference type="InterPro" id="IPR010139">
    <property type="entry name" value="Imidazole-glycPsynth_HisH"/>
</dbReference>
<dbReference type="NCBIfam" id="TIGR01855">
    <property type="entry name" value="IMP_synth_hisH"/>
    <property type="match status" value="1"/>
</dbReference>
<dbReference type="PANTHER" id="PTHR42701">
    <property type="entry name" value="IMIDAZOLE GLYCEROL PHOSPHATE SYNTHASE SUBUNIT HISH"/>
    <property type="match status" value="1"/>
</dbReference>
<dbReference type="PANTHER" id="PTHR42701:SF1">
    <property type="entry name" value="IMIDAZOLE GLYCEROL PHOSPHATE SYNTHASE SUBUNIT HISH"/>
    <property type="match status" value="1"/>
</dbReference>
<dbReference type="Pfam" id="PF00117">
    <property type="entry name" value="GATase"/>
    <property type="match status" value="1"/>
</dbReference>
<dbReference type="PIRSF" id="PIRSF000495">
    <property type="entry name" value="Amidotransf_hisH"/>
    <property type="match status" value="1"/>
</dbReference>
<dbReference type="SUPFAM" id="SSF52317">
    <property type="entry name" value="Class I glutamine amidotransferase-like"/>
    <property type="match status" value="1"/>
</dbReference>
<dbReference type="PROSITE" id="PS51273">
    <property type="entry name" value="GATASE_TYPE_1"/>
    <property type="match status" value="1"/>
</dbReference>
<protein>
    <recommendedName>
        <fullName evidence="1">Imidazole glycerol phosphate synthase subunit HisH</fullName>
        <ecNumber evidence="1">4.3.2.10</ecNumber>
    </recommendedName>
    <alternativeName>
        <fullName evidence="1">IGP synthase glutaminase subunit</fullName>
        <ecNumber evidence="1">3.5.1.2</ecNumber>
    </alternativeName>
    <alternativeName>
        <fullName evidence="1">IGP synthase subunit HisH</fullName>
    </alternativeName>
    <alternativeName>
        <fullName evidence="1">ImGP synthase subunit HisH</fullName>
        <shortName evidence="1">IGPS subunit HisH</shortName>
    </alternativeName>
</protein>
<evidence type="ECO:0000255" key="1">
    <source>
        <dbReference type="HAMAP-Rule" id="MF_00278"/>
    </source>
</evidence>